<dbReference type="EMBL" id="CP000447">
    <property type="protein sequence ID" value="ABI71941.1"/>
    <property type="molecule type" value="Genomic_DNA"/>
</dbReference>
<dbReference type="RefSeq" id="WP_011637551.1">
    <property type="nucleotide sequence ID" value="NC_008345.1"/>
</dbReference>
<dbReference type="SMR" id="Q081X4"/>
<dbReference type="STRING" id="318167.Sfri_2095"/>
<dbReference type="KEGG" id="sfr:Sfri_2095"/>
<dbReference type="eggNOG" id="COG0393">
    <property type="taxonomic scope" value="Bacteria"/>
</dbReference>
<dbReference type="HOGENOM" id="CLU_117144_1_2_6"/>
<dbReference type="OrthoDB" id="9796448at2"/>
<dbReference type="Proteomes" id="UP000000684">
    <property type="component" value="Chromosome"/>
</dbReference>
<dbReference type="Gene3D" id="3.30.110.70">
    <property type="entry name" value="Hypothetical protein apc22750. Chain B"/>
    <property type="match status" value="1"/>
</dbReference>
<dbReference type="HAMAP" id="MF_00338">
    <property type="entry name" value="UPF0145"/>
    <property type="match status" value="1"/>
</dbReference>
<dbReference type="InterPro" id="IPR035439">
    <property type="entry name" value="UPF0145_dom_sf"/>
</dbReference>
<dbReference type="InterPro" id="IPR002765">
    <property type="entry name" value="UPF0145_YbjQ-like"/>
</dbReference>
<dbReference type="PANTHER" id="PTHR34068:SF2">
    <property type="entry name" value="UPF0145 PROTEIN SCO3412"/>
    <property type="match status" value="1"/>
</dbReference>
<dbReference type="PANTHER" id="PTHR34068">
    <property type="entry name" value="UPF0145 PROTEIN YBJQ"/>
    <property type="match status" value="1"/>
</dbReference>
<dbReference type="Pfam" id="PF01906">
    <property type="entry name" value="YbjQ_1"/>
    <property type="match status" value="1"/>
</dbReference>
<dbReference type="SUPFAM" id="SSF117782">
    <property type="entry name" value="YbjQ-like"/>
    <property type="match status" value="1"/>
</dbReference>
<evidence type="ECO:0000255" key="1">
    <source>
        <dbReference type="HAMAP-Rule" id="MF_00338"/>
    </source>
</evidence>
<comment type="similarity">
    <text evidence="1">Belongs to the UPF0145 family.</text>
</comment>
<sequence length="107" mass="11211">MIYTTTETIPGRDIIEIVGVVTGNVVQSKHIGRDIMAGLKSIVGGEIRGYTEMLSDARDVAINRLVASAAQKGADAIVGIRFTTSAIMDGSSEIMAFGTAVKLGPSR</sequence>
<organism>
    <name type="scientific">Shewanella frigidimarina (strain NCIMB 400)</name>
    <dbReference type="NCBI Taxonomy" id="318167"/>
    <lineage>
        <taxon>Bacteria</taxon>
        <taxon>Pseudomonadati</taxon>
        <taxon>Pseudomonadota</taxon>
        <taxon>Gammaproteobacteria</taxon>
        <taxon>Alteromonadales</taxon>
        <taxon>Shewanellaceae</taxon>
        <taxon>Shewanella</taxon>
    </lineage>
</organism>
<feature type="chain" id="PRO_1000013027" description="UPF0145 protein Sfri_2095">
    <location>
        <begin position="1"/>
        <end position="107"/>
    </location>
</feature>
<name>Y2095_SHEFN</name>
<accession>Q081X4</accession>
<keyword id="KW-1185">Reference proteome</keyword>
<proteinExistence type="inferred from homology"/>
<protein>
    <recommendedName>
        <fullName evidence="1">UPF0145 protein Sfri_2095</fullName>
    </recommendedName>
</protein>
<reference key="1">
    <citation type="submission" date="2006-08" db="EMBL/GenBank/DDBJ databases">
        <title>Complete sequence of Shewanella frigidimarina NCIMB 400.</title>
        <authorList>
            <consortium name="US DOE Joint Genome Institute"/>
            <person name="Copeland A."/>
            <person name="Lucas S."/>
            <person name="Lapidus A."/>
            <person name="Barry K."/>
            <person name="Detter J.C."/>
            <person name="Glavina del Rio T."/>
            <person name="Hammon N."/>
            <person name="Israni S."/>
            <person name="Dalin E."/>
            <person name="Tice H."/>
            <person name="Pitluck S."/>
            <person name="Fredrickson J.K."/>
            <person name="Kolker E."/>
            <person name="McCuel L.A."/>
            <person name="DiChristina T."/>
            <person name="Nealson K.H."/>
            <person name="Newman D."/>
            <person name="Tiedje J.M."/>
            <person name="Zhou J."/>
            <person name="Romine M.F."/>
            <person name="Culley D.E."/>
            <person name="Serres M."/>
            <person name="Chertkov O."/>
            <person name="Brettin T."/>
            <person name="Bruce D."/>
            <person name="Han C."/>
            <person name="Tapia R."/>
            <person name="Gilna P."/>
            <person name="Schmutz J."/>
            <person name="Larimer F."/>
            <person name="Land M."/>
            <person name="Hauser L."/>
            <person name="Kyrpides N."/>
            <person name="Mikhailova N."/>
            <person name="Richardson P."/>
        </authorList>
    </citation>
    <scope>NUCLEOTIDE SEQUENCE [LARGE SCALE GENOMIC DNA]</scope>
    <source>
        <strain>NCIMB 400</strain>
    </source>
</reference>
<gene>
    <name type="ordered locus">Sfri_2095</name>
</gene>